<name>TMA7_BOVIN</name>
<organism>
    <name type="scientific">Bos taurus</name>
    <name type="common">Bovine</name>
    <dbReference type="NCBI Taxonomy" id="9913"/>
    <lineage>
        <taxon>Eukaryota</taxon>
        <taxon>Metazoa</taxon>
        <taxon>Chordata</taxon>
        <taxon>Craniata</taxon>
        <taxon>Vertebrata</taxon>
        <taxon>Euteleostomi</taxon>
        <taxon>Mammalia</taxon>
        <taxon>Eutheria</taxon>
        <taxon>Laurasiatheria</taxon>
        <taxon>Artiodactyla</taxon>
        <taxon>Ruminantia</taxon>
        <taxon>Pecora</taxon>
        <taxon>Bovidae</taxon>
        <taxon>Bovinae</taxon>
        <taxon>Bos</taxon>
    </lineage>
</organism>
<protein>
    <recommendedName>
        <fullName>Translation machinery-associated protein 7</fullName>
    </recommendedName>
    <alternativeName>
        <fullName>Coiled-coil domain-containing protein 72</fullName>
    </alternativeName>
</protein>
<evidence type="ECO:0000250" key="1">
    <source>
        <dbReference type="UniProtKB" id="Q9Y2S6"/>
    </source>
</evidence>
<evidence type="ECO:0000255" key="2"/>
<evidence type="ECO:0000256" key="3">
    <source>
        <dbReference type="SAM" id="MobiDB-lite"/>
    </source>
</evidence>
<evidence type="ECO:0000305" key="4"/>
<proteinExistence type="inferred from homology"/>
<gene>
    <name type="primary">TMA7</name>
    <name type="synonym">CCDC72</name>
</gene>
<comment type="similarity">
    <text evidence="4">Belongs to the TMA7 family.</text>
</comment>
<sequence>MSGREGGKKKPLKQPKKQAKEMDEEDKAFKQKQKEEQKKLEELKAKAAGKGPLATGGIKKSGKK</sequence>
<dbReference type="EMBL" id="BC126807">
    <property type="protein sequence ID" value="AAI26808.1"/>
    <property type="molecule type" value="mRNA"/>
</dbReference>
<dbReference type="RefSeq" id="NP_001157275.1">
    <property type="nucleotide sequence ID" value="NM_001163803.2"/>
</dbReference>
<dbReference type="FunCoup" id="A1A4Q4">
    <property type="interactions" value="2178"/>
</dbReference>
<dbReference type="STRING" id="9913.ENSBTAP00000058720"/>
<dbReference type="PaxDb" id="9913-ENSBTAP00000030207"/>
<dbReference type="Ensembl" id="ENSBTAT00000080248.1">
    <property type="protein sequence ID" value="ENSBTAP00000058720.1"/>
    <property type="gene ID" value="ENSBTAG00000053755.1"/>
</dbReference>
<dbReference type="GeneID" id="615251"/>
<dbReference type="KEGG" id="bta:615251"/>
<dbReference type="CTD" id="51372"/>
<dbReference type="VEuPathDB" id="HostDB:ENSBTAG00000053755"/>
<dbReference type="eggNOG" id="KOG4766">
    <property type="taxonomic scope" value="Eukaryota"/>
</dbReference>
<dbReference type="GeneTree" id="ENSGT00390000003710"/>
<dbReference type="HOGENOM" id="CLU_184661_1_1_1"/>
<dbReference type="InParanoid" id="A1A4Q4"/>
<dbReference type="OMA" id="KKGPMNT"/>
<dbReference type="TreeFam" id="TF300250"/>
<dbReference type="Proteomes" id="UP000009136">
    <property type="component" value="Chromosome 22"/>
</dbReference>
<dbReference type="Bgee" id="ENSBTAG00000053755">
    <property type="expression patterns" value="Expressed in cumulus cell and 103 other cell types or tissues"/>
</dbReference>
<dbReference type="InterPro" id="IPR015157">
    <property type="entry name" value="TMA7"/>
</dbReference>
<dbReference type="PANTHER" id="PTHR28632">
    <property type="entry name" value="TRANSLATION MACHINERY-ASSOCIATED PROTEIN 7"/>
    <property type="match status" value="1"/>
</dbReference>
<dbReference type="Pfam" id="PF09072">
    <property type="entry name" value="TMA7"/>
    <property type="match status" value="1"/>
</dbReference>
<accession>A1A4Q4</accession>
<feature type="chain" id="PRO_0000291652" description="Translation machinery-associated protein 7">
    <location>
        <begin position="1"/>
        <end position="64"/>
    </location>
</feature>
<feature type="region of interest" description="Disordered" evidence="3">
    <location>
        <begin position="1"/>
        <end position="64"/>
    </location>
</feature>
<feature type="coiled-coil region" evidence="2">
    <location>
        <begin position="21"/>
        <end position="50"/>
    </location>
</feature>
<feature type="compositionally biased region" description="Basic and acidic residues" evidence="3">
    <location>
        <begin position="27"/>
        <end position="45"/>
    </location>
</feature>
<feature type="modified residue" description="ADP-ribosylserine" evidence="1">
    <location>
        <position position="61"/>
    </location>
</feature>
<reference key="1">
    <citation type="submission" date="2006-10" db="EMBL/GenBank/DDBJ databases">
        <authorList>
            <consortium name="NIH - Mammalian Gene Collection (MGC) project"/>
        </authorList>
    </citation>
    <scope>NUCLEOTIDE SEQUENCE [LARGE SCALE MRNA]</scope>
    <source>
        <strain>Hereford</strain>
        <tissue>Fetal brain</tissue>
    </source>
</reference>
<keyword id="KW-0013">ADP-ribosylation</keyword>
<keyword id="KW-0175">Coiled coil</keyword>
<keyword id="KW-1185">Reference proteome</keyword>